<evidence type="ECO:0000255" key="1"/>
<evidence type="ECO:0000305" key="2"/>
<sequence length="483" mass="53602">MGKKLKYTKFQLRSNVVKPNICMSLTTDIAGEAKLKDLERQKKGDARTVVAIILGGGAGTRLFPLTKRRAKPAVPMGGAYRLIDVPMSNCINSGINKVYILTQFNSASLNRHIARAYNFGNGVTFESGYVEVLAATQTPGELGKRWFQGTAHAVRQFHWLFEDARSKDIEDVLILSGDHLYRMDYLHFVQSHRQSGADITISSLPIDDSRASDFGLMKIDDTGRVMSFSEKPKGDDLKAMAVDTTVLGLSPEEAKEKPYIASIGKVYVFKKDILLNLLRWRFPTANDFGSEIIPASTKEFCVKAYLFNDYWEDIGTIRSFFRANLALTEHPPRFSFYDATKPIYTSRRNLPPSAIDNSKIVDSIVSHGIFLTNCFVEHSVVGIRSRIGTNVHLKDTVMLGADYYETDAEIRSQLAEGKVPLGIGENTRIKDCIIDKNARIGKNVVIANSEGVQEADRSSEGFYMASGITVISKNSTIPDGTVI</sequence>
<accession>P55243</accession>
<name>GLGL3_SOLTU</name>
<protein>
    <recommendedName>
        <fullName>Glucose-1-phosphate adenylyltransferase large subunit 3, chloroplastic/amyloplastic</fullName>
        <ecNumber>2.7.7.27</ecNumber>
    </recommendedName>
    <alternativeName>
        <fullName>ADP-glucose pyrophosphorylase</fullName>
    </alternativeName>
    <alternativeName>
        <fullName>ADP-glucose synthase</fullName>
    </alternativeName>
    <alternativeName>
        <fullName>AGPase S</fullName>
    </alternativeName>
    <alternativeName>
        <fullName>Alpha-D-glucose-1-phosphate adenyl transferase</fullName>
    </alternativeName>
</protein>
<comment type="function">
    <text>This protein plays a role in synthesis of starch. It catalyzes the synthesis of the activated glycosyl donor, ADP-glucose from Glc-1-P and ATP.</text>
</comment>
<comment type="catalytic activity">
    <reaction>
        <text>alpha-D-glucose 1-phosphate + ATP + H(+) = ADP-alpha-D-glucose + diphosphate</text>
        <dbReference type="Rhea" id="RHEA:12120"/>
        <dbReference type="ChEBI" id="CHEBI:15378"/>
        <dbReference type="ChEBI" id="CHEBI:30616"/>
        <dbReference type="ChEBI" id="CHEBI:33019"/>
        <dbReference type="ChEBI" id="CHEBI:57498"/>
        <dbReference type="ChEBI" id="CHEBI:58601"/>
        <dbReference type="EC" id="2.7.7.27"/>
    </reaction>
</comment>
<comment type="activity regulation">
    <text>Activated by 3'phosphoglycerate, inhibited by orthophosphate. Allosteric regulation.</text>
</comment>
<comment type="pathway">
    <text>Glycan biosynthesis; starch biosynthesis.</text>
</comment>
<comment type="subunit">
    <text>Heterotetramer.</text>
</comment>
<comment type="subcellular location">
    <subcellularLocation>
        <location>Plastid</location>
        <location>Chloroplast</location>
    </subcellularLocation>
    <subcellularLocation>
        <location>Plastid</location>
        <location>Amyloplast</location>
    </subcellularLocation>
    <text>Found in the chloroplast in leaf. Found in the plastid in the developing endosperm.</text>
</comment>
<comment type="tissue specificity">
    <text>Tubers.</text>
</comment>
<comment type="similarity">
    <text evidence="2">Belongs to the bacterial/plant glucose-1-phosphate adenylyltransferase family.</text>
</comment>
<organism>
    <name type="scientific">Solanum tuberosum</name>
    <name type="common">Potato</name>
    <dbReference type="NCBI Taxonomy" id="4113"/>
    <lineage>
        <taxon>Eukaryota</taxon>
        <taxon>Viridiplantae</taxon>
        <taxon>Streptophyta</taxon>
        <taxon>Embryophyta</taxon>
        <taxon>Tracheophyta</taxon>
        <taxon>Spermatophyta</taxon>
        <taxon>Magnoliopsida</taxon>
        <taxon>eudicotyledons</taxon>
        <taxon>Gunneridae</taxon>
        <taxon>Pentapetalae</taxon>
        <taxon>asterids</taxon>
        <taxon>lamiids</taxon>
        <taxon>Solanales</taxon>
        <taxon>Solanaceae</taxon>
        <taxon>Solanoideae</taxon>
        <taxon>Solaneae</taxon>
        <taxon>Solanum</taxon>
    </lineage>
</organism>
<gene>
    <name type="primary">AGPS3</name>
</gene>
<feature type="transit peptide" description="Chloroplast" evidence="1">
    <location>
        <begin position="1"/>
        <end status="unknown"/>
    </location>
</feature>
<feature type="chain" id="PRO_0000011168" description="Glucose-1-phosphate adenylyltransferase large subunit 3, chloroplastic/amyloplastic">
    <location>
        <begin status="unknown"/>
        <end position="483"/>
    </location>
</feature>
<proteinExistence type="evidence at transcript level"/>
<reference key="1">
    <citation type="journal article" date="1995" name="Mol. Gen. Genet.">
        <title>Molecular cloning and characterization of novel isoforms of potato ADP-glucose pyrophosphorylase.</title>
        <authorList>
            <person name="la Cognata U."/>
            <person name="Willmitzer L."/>
            <person name="Mueller-Roeber B."/>
        </authorList>
    </citation>
    <scope>NUCLEOTIDE SEQUENCE [MRNA]</scope>
    <source>
        <strain>cv. Desiree</strain>
        <tissue>Leaf</tissue>
    </source>
</reference>
<dbReference type="EC" id="2.7.7.27"/>
<dbReference type="EMBL" id="X76136">
    <property type="protein sequence ID" value="CAA53741.1"/>
    <property type="molecule type" value="mRNA"/>
</dbReference>
<dbReference type="PIR" id="S53992">
    <property type="entry name" value="S53992"/>
</dbReference>
<dbReference type="RefSeq" id="NP_001275395.1">
    <property type="nucleotide sequence ID" value="NM_001288466.1"/>
</dbReference>
<dbReference type="SMR" id="P55243"/>
<dbReference type="FunCoup" id="P55243">
    <property type="interactions" value="981"/>
</dbReference>
<dbReference type="STRING" id="4113.P55243"/>
<dbReference type="PaxDb" id="4113-PGSC0003DMT400023304"/>
<dbReference type="ProMEX" id="P55243"/>
<dbReference type="GeneID" id="102582750"/>
<dbReference type="KEGG" id="sot:102582750"/>
<dbReference type="eggNOG" id="KOG1322">
    <property type="taxonomic scope" value="Eukaryota"/>
</dbReference>
<dbReference type="InParanoid" id="P55243"/>
<dbReference type="OrthoDB" id="1733332at2759"/>
<dbReference type="BRENDA" id="2.7.7.27">
    <property type="organism ID" value="5757"/>
</dbReference>
<dbReference type="UniPathway" id="UPA00152"/>
<dbReference type="Proteomes" id="UP000011115">
    <property type="component" value="Unassembled WGS sequence"/>
</dbReference>
<dbReference type="ExpressionAtlas" id="P55243">
    <property type="expression patterns" value="baseline and differential"/>
</dbReference>
<dbReference type="GO" id="GO:0009501">
    <property type="term" value="C:amyloplast"/>
    <property type="evidence" value="ECO:0007669"/>
    <property type="project" value="UniProtKB-SubCell"/>
</dbReference>
<dbReference type="GO" id="GO:0009507">
    <property type="term" value="C:chloroplast"/>
    <property type="evidence" value="ECO:0007669"/>
    <property type="project" value="UniProtKB-SubCell"/>
</dbReference>
<dbReference type="GO" id="GO:0005524">
    <property type="term" value="F:ATP binding"/>
    <property type="evidence" value="ECO:0007669"/>
    <property type="project" value="UniProtKB-KW"/>
</dbReference>
<dbReference type="GO" id="GO:0008878">
    <property type="term" value="F:glucose-1-phosphate adenylyltransferase activity"/>
    <property type="evidence" value="ECO:0007669"/>
    <property type="project" value="UniProtKB-EC"/>
</dbReference>
<dbReference type="GO" id="GO:0005978">
    <property type="term" value="P:glycogen biosynthetic process"/>
    <property type="evidence" value="ECO:0007669"/>
    <property type="project" value="InterPro"/>
</dbReference>
<dbReference type="GO" id="GO:0019252">
    <property type="term" value="P:starch biosynthetic process"/>
    <property type="evidence" value="ECO:0007669"/>
    <property type="project" value="UniProtKB-UniPathway"/>
</dbReference>
<dbReference type="CDD" id="cd02508">
    <property type="entry name" value="ADP_Glucose_PP"/>
    <property type="match status" value="1"/>
</dbReference>
<dbReference type="CDD" id="cd04651">
    <property type="entry name" value="LbH_G1P_AT_C"/>
    <property type="match status" value="1"/>
</dbReference>
<dbReference type="FunFam" id="3.90.550.10:FF:000030">
    <property type="entry name" value="Glucose-1-phosphate adenylyltransferase"/>
    <property type="match status" value="1"/>
</dbReference>
<dbReference type="Gene3D" id="2.160.10.10">
    <property type="entry name" value="Hexapeptide repeat proteins"/>
    <property type="match status" value="1"/>
</dbReference>
<dbReference type="Gene3D" id="3.90.550.10">
    <property type="entry name" value="Spore Coat Polysaccharide Biosynthesis Protein SpsA, Chain A"/>
    <property type="match status" value="1"/>
</dbReference>
<dbReference type="InterPro" id="IPR011831">
    <property type="entry name" value="ADP-Glc_PPase"/>
</dbReference>
<dbReference type="InterPro" id="IPR005836">
    <property type="entry name" value="ADP_Glu_pyroP_CS"/>
</dbReference>
<dbReference type="InterPro" id="IPR005835">
    <property type="entry name" value="NTP_transferase_dom"/>
</dbReference>
<dbReference type="InterPro" id="IPR029044">
    <property type="entry name" value="Nucleotide-diphossugar_trans"/>
</dbReference>
<dbReference type="InterPro" id="IPR011004">
    <property type="entry name" value="Trimer_LpxA-like_sf"/>
</dbReference>
<dbReference type="NCBIfam" id="TIGR02091">
    <property type="entry name" value="glgC"/>
    <property type="match status" value="1"/>
</dbReference>
<dbReference type="NCBIfam" id="NF002772">
    <property type="entry name" value="PRK02862.1"/>
    <property type="match status" value="1"/>
</dbReference>
<dbReference type="PANTHER" id="PTHR43523:SF12">
    <property type="entry name" value="GLUCOSE-1-PHOSPHATE ADENYLYLTRANSFERASE LARGE SUBUNIT 1, CHLOROPLASTIC-RELATED"/>
    <property type="match status" value="1"/>
</dbReference>
<dbReference type="PANTHER" id="PTHR43523">
    <property type="entry name" value="GLUCOSE-1-PHOSPHATE ADENYLYLTRANSFERASE-RELATED"/>
    <property type="match status" value="1"/>
</dbReference>
<dbReference type="Pfam" id="PF25247">
    <property type="entry name" value="LbH_GLGC"/>
    <property type="match status" value="1"/>
</dbReference>
<dbReference type="Pfam" id="PF00483">
    <property type="entry name" value="NTP_transferase"/>
    <property type="match status" value="1"/>
</dbReference>
<dbReference type="SUPFAM" id="SSF53448">
    <property type="entry name" value="Nucleotide-diphospho-sugar transferases"/>
    <property type="match status" value="1"/>
</dbReference>
<dbReference type="SUPFAM" id="SSF51161">
    <property type="entry name" value="Trimeric LpxA-like enzymes"/>
    <property type="match status" value="1"/>
</dbReference>
<dbReference type="PROSITE" id="PS00808">
    <property type="entry name" value="ADP_GLC_PYROPHOSPH_1"/>
    <property type="match status" value="1"/>
</dbReference>
<dbReference type="PROSITE" id="PS00809">
    <property type="entry name" value="ADP_GLC_PYROPHOSPH_2"/>
    <property type="match status" value="1"/>
</dbReference>
<keyword id="KW-0021">Allosteric enzyme</keyword>
<keyword id="KW-0035">Amyloplast</keyword>
<keyword id="KW-0067">ATP-binding</keyword>
<keyword id="KW-0150">Chloroplast</keyword>
<keyword id="KW-0547">Nucleotide-binding</keyword>
<keyword id="KW-0548">Nucleotidyltransferase</keyword>
<keyword id="KW-0934">Plastid</keyword>
<keyword id="KW-1185">Reference proteome</keyword>
<keyword id="KW-0750">Starch biosynthesis</keyword>
<keyword id="KW-0808">Transferase</keyword>
<keyword id="KW-0809">Transit peptide</keyword>